<reference key="1">
    <citation type="journal article" date="1997" name="Genomics">
        <title>Cloning and characterization of freac-9 (FKHL17), a novel kidney-expressed human forkhead gene that maps to chromosome 1p32-p34.</title>
        <authorList>
            <person name="Ernstsson S."/>
            <person name="Betz R."/>
            <person name="Lagercrantz S."/>
            <person name="Larsson C."/>
            <person name="Ericksson S."/>
            <person name="Cederberg A."/>
            <person name="Carlsson P."/>
            <person name="Enerbaeck S."/>
        </authorList>
    </citation>
    <scope>NUCLEOTIDE SEQUENCE [MRNA]</scope>
    <scope>TISSUE SPECIFICITY</scope>
    <scope>VARIANT PRO-368</scope>
</reference>
<reference key="2">
    <citation type="submission" date="1998-04" db="EMBL/GenBank/DDBJ databases">
        <authorList>
            <person name="Enerbaeck S."/>
        </authorList>
    </citation>
    <scope>SEQUENCE REVISION</scope>
</reference>
<reference key="3">
    <citation type="journal article" date="2006" name="Nature">
        <title>The DNA sequence and biological annotation of human chromosome 1.</title>
        <authorList>
            <person name="Gregory S.G."/>
            <person name="Barlow K.F."/>
            <person name="McLay K.E."/>
            <person name="Kaul R."/>
            <person name="Swarbreck D."/>
            <person name="Dunham A."/>
            <person name="Scott C.E."/>
            <person name="Howe K.L."/>
            <person name="Woodfine K."/>
            <person name="Spencer C.C.A."/>
            <person name="Jones M.C."/>
            <person name="Gillson C."/>
            <person name="Searle S."/>
            <person name="Zhou Y."/>
            <person name="Kokocinski F."/>
            <person name="McDonald L."/>
            <person name="Evans R."/>
            <person name="Phillips K."/>
            <person name="Atkinson A."/>
            <person name="Cooper R."/>
            <person name="Jones C."/>
            <person name="Hall R.E."/>
            <person name="Andrews T.D."/>
            <person name="Lloyd C."/>
            <person name="Ainscough R."/>
            <person name="Almeida J.P."/>
            <person name="Ambrose K.D."/>
            <person name="Anderson F."/>
            <person name="Andrew R.W."/>
            <person name="Ashwell R.I.S."/>
            <person name="Aubin K."/>
            <person name="Babbage A.K."/>
            <person name="Bagguley C.L."/>
            <person name="Bailey J."/>
            <person name="Beasley H."/>
            <person name="Bethel G."/>
            <person name="Bird C.P."/>
            <person name="Bray-Allen S."/>
            <person name="Brown J.Y."/>
            <person name="Brown A.J."/>
            <person name="Buckley D."/>
            <person name="Burton J."/>
            <person name="Bye J."/>
            <person name="Carder C."/>
            <person name="Chapman J.C."/>
            <person name="Clark S.Y."/>
            <person name="Clarke G."/>
            <person name="Clee C."/>
            <person name="Cobley V."/>
            <person name="Collier R.E."/>
            <person name="Corby N."/>
            <person name="Coville G.J."/>
            <person name="Davies J."/>
            <person name="Deadman R."/>
            <person name="Dunn M."/>
            <person name="Earthrowl M."/>
            <person name="Ellington A.G."/>
            <person name="Errington H."/>
            <person name="Frankish A."/>
            <person name="Frankland J."/>
            <person name="French L."/>
            <person name="Garner P."/>
            <person name="Garnett J."/>
            <person name="Gay L."/>
            <person name="Ghori M.R.J."/>
            <person name="Gibson R."/>
            <person name="Gilby L.M."/>
            <person name="Gillett W."/>
            <person name="Glithero R.J."/>
            <person name="Grafham D.V."/>
            <person name="Griffiths C."/>
            <person name="Griffiths-Jones S."/>
            <person name="Grocock R."/>
            <person name="Hammond S."/>
            <person name="Harrison E.S.I."/>
            <person name="Hart E."/>
            <person name="Haugen E."/>
            <person name="Heath P.D."/>
            <person name="Holmes S."/>
            <person name="Holt K."/>
            <person name="Howden P.J."/>
            <person name="Hunt A.R."/>
            <person name="Hunt S.E."/>
            <person name="Hunter G."/>
            <person name="Isherwood J."/>
            <person name="James R."/>
            <person name="Johnson C."/>
            <person name="Johnson D."/>
            <person name="Joy A."/>
            <person name="Kay M."/>
            <person name="Kershaw J.K."/>
            <person name="Kibukawa M."/>
            <person name="Kimberley A.M."/>
            <person name="King A."/>
            <person name="Knights A.J."/>
            <person name="Lad H."/>
            <person name="Laird G."/>
            <person name="Lawlor S."/>
            <person name="Leongamornlert D.A."/>
            <person name="Lloyd D.M."/>
            <person name="Loveland J."/>
            <person name="Lovell J."/>
            <person name="Lush M.J."/>
            <person name="Lyne R."/>
            <person name="Martin S."/>
            <person name="Mashreghi-Mohammadi M."/>
            <person name="Matthews L."/>
            <person name="Matthews N.S.W."/>
            <person name="McLaren S."/>
            <person name="Milne S."/>
            <person name="Mistry S."/>
            <person name="Moore M.J.F."/>
            <person name="Nickerson T."/>
            <person name="O'Dell C.N."/>
            <person name="Oliver K."/>
            <person name="Palmeiri A."/>
            <person name="Palmer S.A."/>
            <person name="Parker A."/>
            <person name="Patel D."/>
            <person name="Pearce A.V."/>
            <person name="Peck A.I."/>
            <person name="Pelan S."/>
            <person name="Phelps K."/>
            <person name="Phillimore B.J."/>
            <person name="Plumb R."/>
            <person name="Rajan J."/>
            <person name="Raymond C."/>
            <person name="Rouse G."/>
            <person name="Saenphimmachak C."/>
            <person name="Sehra H.K."/>
            <person name="Sheridan E."/>
            <person name="Shownkeen R."/>
            <person name="Sims S."/>
            <person name="Skuce C.D."/>
            <person name="Smith M."/>
            <person name="Steward C."/>
            <person name="Subramanian S."/>
            <person name="Sycamore N."/>
            <person name="Tracey A."/>
            <person name="Tromans A."/>
            <person name="Van Helmond Z."/>
            <person name="Wall M."/>
            <person name="Wallis J.M."/>
            <person name="White S."/>
            <person name="Whitehead S.L."/>
            <person name="Wilkinson J.E."/>
            <person name="Willey D.L."/>
            <person name="Williams H."/>
            <person name="Wilming L."/>
            <person name="Wray P.W."/>
            <person name="Wu Z."/>
            <person name="Coulson A."/>
            <person name="Vaudin M."/>
            <person name="Sulston J.E."/>
            <person name="Durbin R.M."/>
            <person name="Hubbard T."/>
            <person name="Wooster R."/>
            <person name="Dunham I."/>
            <person name="Carter N.P."/>
            <person name="McVean G."/>
            <person name="Ross M.T."/>
            <person name="Harrow J."/>
            <person name="Olson M.V."/>
            <person name="Beck S."/>
            <person name="Rogers J."/>
            <person name="Bentley D.R."/>
        </authorList>
    </citation>
    <scope>NUCLEOTIDE SEQUENCE [LARGE SCALE GENOMIC DNA]</scope>
</reference>
<reference key="4">
    <citation type="journal article" date="2013" name="J. Proteome Res.">
        <title>Toward a comprehensive characterization of a human cancer cell phosphoproteome.</title>
        <authorList>
            <person name="Zhou H."/>
            <person name="Di Palma S."/>
            <person name="Preisinger C."/>
            <person name="Peng M."/>
            <person name="Polat A.N."/>
            <person name="Heck A.J."/>
            <person name="Mohammed S."/>
        </authorList>
    </citation>
    <scope>PHOSPHORYLATION [LARGE SCALE ANALYSIS] AT SER-96</scope>
    <scope>IDENTIFICATION BY MASS SPECTROMETRY [LARGE SCALE ANALYSIS]</scope>
    <source>
        <tissue>Cervix carcinoma</tissue>
    </source>
</reference>
<feature type="chain" id="PRO_0000091815" description="Forkhead box protein D2">
    <location>
        <begin position="1"/>
        <end position="495"/>
    </location>
</feature>
<feature type="DNA-binding region" description="Fork-head" evidence="2">
    <location>
        <begin position="126"/>
        <end position="217"/>
    </location>
</feature>
<feature type="region of interest" description="Disordered" evidence="3">
    <location>
        <begin position="14"/>
        <end position="122"/>
    </location>
</feature>
<feature type="region of interest" description="Disordered" evidence="3">
    <location>
        <begin position="312"/>
        <end position="347"/>
    </location>
</feature>
<feature type="region of interest" description="Disordered" evidence="3">
    <location>
        <begin position="397"/>
        <end position="444"/>
    </location>
</feature>
<feature type="compositionally biased region" description="Basic and acidic residues" evidence="3">
    <location>
        <begin position="47"/>
        <end position="59"/>
    </location>
</feature>
<feature type="compositionally biased region" description="Acidic residues" evidence="3">
    <location>
        <begin position="60"/>
        <end position="74"/>
    </location>
</feature>
<feature type="compositionally biased region" description="Low complexity" evidence="3">
    <location>
        <begin position="83"/>
        <end position="107"/>
    </location>
</feature>
<feature type="compositionally biased region" description="Low complexity" evidence="3">
    <location>
        <begin position="329"/>
        <end position="342"/>
    </location>
</feature>
<feature type="compositionally biased region" description="Gly residues" evidence="3">
    <location>
        <begin position="397"/>
        <end position="406"/>
    </location>
</feature>
<feature type="compositionally biased region" description="Gly residues" evidence="3">
    <location>
        <begin position="419"/>
        <end position="434"/>
    </location>
</feature>
<feature type="modified residue" description="Phosphoserine" evidence="6">
    <location>
        <position position="96"/>
    </location>
</feature>
<feature type="sequence variant" id="VAR_061185" description="In dbSNP:rs2405913." evidence="4">
    <original>A</original>
    <variation>P</variation>
    <location>
        <position position="368"/>
    </location>
</feature>
<feature type="sequence conflict" description="In Ref. 1; AAC15421." evidence="5" ref="1">
    <original>H</original>
    <variation>HPH</variation>
    <location>
        <position position="293"/>
    </location>
</feature>
<dbReference type="EMBL" id="AF042832">
    <property type="protein sequence ID" value="AAC15421.1"/>
    <property type="molecule type" value="mRNA"/>
</dbReference>
<dbReference type="EMBL" id="AL607122">
    <property type="status" value="NOT_ANNOTATED_CDS"/>
    <property type="molecule type" value="Genomic_DNA"/>
</dbReference>
<dbReference type="CCDS" id="CCDS30708.1"/>
<dbReference type="RefSeq" id="NP_004465.3">
    <property type="nucleotide sequence ID" value="NM_004474.4"/>
</dbReference>
<dbReference type="SMR" id="O60548"/>
<dbReference type="BioGRID" id="108595">
    <property type="interactions" value="26"/>
</dbReference>
<dbReference type="FunCoup" id="O60548">
    <property type="interactions" value="122"/>
</dbReference>
<dbReference type="IntAct" id="O60548">
    <property type="interactions" value="23"/>
</dbReference>
<dbReference type="STRING" id="9606.ENSP00000335493"/>
<dbReference type="iPTMnet" id="O60548"/>
<dbReference type="PhosphoSitePlus" id="O60548"/>
<dbReference type="BioMuta" id="FOXD2"/>
<dbReference type="jPOST" id="O60548"/>
<dbReference type="MassIVE" id="O60548"/>
<dbReference type="PaxDb" id="9606-ENSP00000335493"/>
<dbReference type="PeptideAtlas" id="O60548"/>
<dbReference type="ProteomicsDB" id="49466"/>
<dbReference type="Pumba" id="O60548"/>
<dbReference type="Antibodypedia" id="32890">
    <property type="antibodies" value="109 antibodies from 21 providers"/>
</dbReference>
<dbReference type="DNASU" id="2306"/>
<dbReference type="Ensembl" id="ENST00000334793.6">
    <property type="protein sequence ID" value="ENSP00000335493.6"/>
    <property type="gene ID" value="ENSG00000186564.6"/>
</dbReference>
<dbReference type="GeneID" id="2306"/>
<dbReference type="KEGG" id="hsa:2306"/>
<dbReference type="MANE-Select" id="ENST00000334793.6">
    <property type="protein sequence ID" value="ENSP00000335493.6"/>
    <property type="RefSeq nucleotide sequence ID" value="NM_004474.4"/>
    <property type="RefSeq protein sequence ID" value="NP_004465.3"/>
</dbReference>
<dbReference type="UCSC" id="uc001crm.3">
    <property type="organism name" value="human"/>
</dbReference>
<dbReference type="AGR" id="HGNC:3803"/>
<dbReference type="CTD" id="2306"/>
<dbReference type="DisGeNET" id="2306"/>
<dbReference type="GeneCards" id="FOXD2"/>
<dbReference type="HGNC" id="HGNC:3803">
    <property type="gene designation" value="FOXD2"/>
</dbReference>
<dbReference type="HPA" id="ENSG00000186564">
    <property type="expression patterns" value="Tissue enhanced (intestine)"/>
</dbReference>
<dbReference type="MIM" id="602211">
    <property type="type" value="gene"/>
</dbReference>
<dbReference type="neXtProt" id="NX_O60548"/>
<dbReference type="OpenTargets" id="ENSG00000186564"/>
<dbReference type="PharmGKB" id="PA28220"/>
<dbReference type="VEuPathDB" id="HostDB:ENSG00000186564"/>
<dbReference type="eggNOG" id="KOG2294">
    <property type="taxonomic scope" value="Eukaryota"/>
</dbReference>
<dbReference type="GeneTree" id="ENSGT00940000157140"/>
<dbReference type="HOGENOM" id="CLU_040357_5_0_1"/>
<dbReference type="InParanoid" id="O60548"/>
<dbReference type="OMA" id="TNLNNCP"/>
<dbReference type="OrthoDB" id="5402974at2759"/>
<dbReference type="PAN-GO" id="O60548">
    <property type="GO annotations" value="5 GO annotations based on evolutionary models"/>
</dbReference>
<dbReference type="PhylomeDB" id="O60548"/>
<dbReference type="TreeFam" id="TF316127"/>
<dbReference type="PathwayCommons" id="O60548"/>
<dbReference type="SignaLink" id="O60548"/>
<dbReference type="SIGNOR" id="O60548"/>
<dbReference type="BioGRID-ORCS" id="2306">
    <property type="hits" value="17 hits in 1181 CRISPR screens"/>
</dbReference>
<dbReference type="ChiTaRS" id="FOXD2">
    <property type="organism name" value="human"/>
</dbReference>
<dbReference type="GenomeRNAi" id="2306"/>
<dbReference type="Pharos" id="O60548">
    <property type="development level" value="Tbio"/>
</dbReference>
<dbReference type="PRO" id="PR:O60548"/>
<dbReference type="Proteomes" id="UP000005640">
    <property type="component" value="Chromosome 1"/>
</dbReference>
<dbReference type="RNAct" id="O60548">
    <property type="molecule type" value="protein"/>
</dbReference>
<dbReference type="Bgee" id="ENSG00000186564">
    <property type="expression patterns" value="Expressed in mucosa of transverse colon and 89 other cell types or tissues"/>
</dbReference>
<dbReference type="GO" id="GO:0000785">
    <property type="term" value="C:chromatin"/>
    <property type="evidence" value="ECO:0000247"/>
    <property type="project" value="NTNU_SB"/>
</dbReference>
<dbReference type="GO" id="GO:0005634">
    <property type="term" value="C:nucleus"/>
    <property type="evidence" value="ECO:0007669"/>
    <property type="project" value="UniProtKB-SubCell"/>
</dbReference>
<dbReference type="GO" id="GO:0001228">
    <property type="term" value="F:DNA-binding transcription activator activity, RNA polymerase II-specific"/>
    <property type="evidence" value="ECO:0000314"/>
    <property type="project" value="NTNU_SB"/>
</dbReference>
<dbReference type="GO" id="GO:0003700">
    <property type="term" value="F:DNA-binding transcription factor activity"/>
    <property type="evidence" value="ECO:0000304"/>
    <property type="project" value="ProtInc"/>
</dbReference>
<dbReference type="GO" id="GO:0000981">
    <property type="term" value="F:DNA-binding transcription factor activity, RNA polymerase II-specific"/>
    <property type="evidence" value="ECO:0000247"/>
    <property type="project" value="NTNU_SB"/>
</dbReference>
<dbReference type="GO" id="GO:0000978">
    <property type="term" value="F:RNA polymerase II cis-regulatory region sequence-specific DNA binding"/>
    <property type="evidence" value="ECO:0000318"/>
    <property type="project" value="GO_Central"/>
</dbReference>
<dbReference type="GO" id="GO:0043565">
    <property type="term" value="F:sequence-specific DNA binding"/>
    <property type="evidence" value="ECO:0000314"/>
    <property type="project" value="NTNU_SB"/>
</dbReference>
<dbReference type="GO" id="GO:1990837">
    <property type="term" value="F:sequence-specific double-stranded DNA binding"/>
    <property type="evidence" value="ECO:0000314"/>
    <property type="project" value="ARUK-UCL"/>
</dbReference>
<dbReference type="GO" id="GO:0009653">
    <property type="term" value="P:anatomical structure morphogenesis"/>
    <property type="evidence" value="ECO:0000318"/>
    <property type="project" value="GO_Central"/>
</dbReference>
<dbReference type="GO" id="GO:0030154">
    <property type="term" value="P:cell differentiation"/>
    <property type="evidence" value="ECO:0000318"/>
    <property type="project" value="GO_Central"/>
</dbReference>
<dbReference type="GO" id="GO:0045944">
    <property type="term" value="P:positive regulation of transcription by RNA polymerase II"/>
    <property type="evidence" value="ECO:0000314"/>
    <property type="project" value="NTNU_SB"/>
</dbReference>
<dbReference type="GO" id="GO:0006357">
    <property type="term" value="P:regulation of transcription by RNA polymerase II"/>
    <property type="evidence" value="ECO:0000318"/>
    <property type="project" value="GO_Central"/>
</dbReference>
<dbReference type="CDD" id="cd20046">
    <property type="entry name" value="FH_FOXD1_D2-like"/>
    <property type="match status" value="1"/>
</dbReference>
<dbReference type="FunFam" id="1.10.10.10:FF:000016">
    <property type="entry name" value="Forkhead box protein I1"/>
    <property type="match status" value="1"/>
</dbReference>
<dbReference type="Gene3D" id="1.10.10.10">
    <property type="entry name" value="Winged helix-like DNA-binding domain superfamily/Winged helix DNA-binding domain"/>
    <property type="match status" value="1"/>
</dbReference>
<dbReference type="InterPro" id="IPR001766">
    <property type="entry name" value="Fork_head_dom"/>
</dbReference>
<dbReference type="InterPro" id="IPR050211">
    <property type="entry name" value="FOX_domain-containing"/>
</dbReference>
<dbReference type="InterPro" id="IPR018122">
    <property type="entry name" value="TF_fork_head_CS_1"/>
</dbReference>
<dbReference type="InterPro" id="IPR030456">
    <property type="entry name" value="TF_fork_head_CS_2"/>
</dbReference>
<dbReference type="InterPro" id="IPR036388">
    <property type="entry name" value="WH-like_DNA-bd_sf"/>
</dbReference>
<dbReference type="InterPro" id="IPR036390">
    <property type="entry name" value="WH_DNA-bd_sf"/>
</dbReference>
<dbReference type="PANTHER" id="PTHR11829">
    <property type="entry name" value="FORKHEAD BOX PROTEIN"/>
    <property type="match status" value="1"/>
</dbReference>
<dbReference type="PANTHER" id="PTHR11829:SF373">
    <property type="entry name" value="FORKHEAD BOX PROTEIN D2"/>
    <property type="match status" value="1"/>
</dbReference>
<dbReference type="Pfam" id="PF00250">
    <property type="entry name" value="Forkhead"/>
    <property type="match status" value="1"/>
</dbReference>
<dbReference type="PRINTS" id="PR00053">
    <property type="entry name" value="FORKHEAD"/>
</dbReference>
<dbReference type="SMART" id="SM00339">
    <property type="entry name" value="FH"/>
    <property type="match status" value="1"/>
</dbReference>
<dbReference type="SUPFAM" id="SSF46785">
    <property type="entry name" value="Winged helix' DNA-binding domain"/>
    <property type="match status" value="1"/>
</dbReference>
<dbReference type="PROSITE" id="PS00657">
    <property type="entry name" value="FORK_HEAD_1"/>
    <property type="match status" value="1"/>
</dbReference>
<dbReference type="PROSITE" id="PS00658">
    <property type="entry name" value="FORK_HEAD_2"/>
    <property type="match status" value="1"/>
</dbReference>
<dbReference type="PROSITE" id="PS50039">
    <property type="entry name" value="FORK_HEAD_3"/>
    <property type="match status" value="1"/>
</dbReference>
<accession>O60548</accession>
<accession>Q5SVZ3</accession>
<keyword id="KW-0238">DNA-binding</keyword>
<keyword id="KW-0539">Nucleus</keyword>
<keyword id="KW-0597">Phosphoprotein</keyword>
<keyword id="KW-1267">Proteomics identification</keyword>
<keyword id="KW-1185">Reference proteome</keyword>
<keyword id="KW-0804">Transcription</keyword>
<keyword id="KW-0805">Transcription regulation</keyword>
<organism>
    <name type="scientific">Homo sapiens</name>
    <name type="common">Human</name>
    <dbReference type="NCBI Taxonomy" id="9606"/>
    <lineage>
        <taxon>Eukaryota</taxon>
        <taxon>Metazoa</taxon>
        <taxon>Chordata</taxon>
        <taxon>Craniata</taxon>
        <taxon>Vertebrata</taxon>
        <taxon>Euteleostomi</taxon>
        <taxon>Mammalia</taxon>
        <taxon>Eutheria</taxon>
        <taxon>Euarchontoglires</taxon>
        <taxon>Primates</taxon>
        <taxon>Haplorrhini</taxon>
        <taxon>Catarrhini</taxon>
        <taxon>Hominidae</taxon>
        <taxon>Homo</taxon>
    </lineage>
</organism>
<proteinExistence type="evidence at protein level"/>
<gene>
    <name type="primary">FOXD2</name>
    <name type="synonym">FKHL17</name>
    <name type="synonym">FREAC9</name>
</gene>
<evidence type="ECO:0000250" key="1"/>
<evidence type="ECO:0000255" key="2">
    <source>
        <dbReference type="PROSITE-ProRule" id="PRU00089"/>
    </source>
</evidence>
<evidence type="ECO:0000256" key="3">
    <source>
        <dbReference type="SAM" id="MobiDB-lite"/>
    </source>
</evidence>
<evidence type="ECO:0000269" key="4">
    <source>
    </source>
</evidence>
<evidence type="ECO:0000305" key="5"/>
<evidence type="ECO:0007744" key="6">
    <source>
    </source>
</evidence>
<name>FOXD2_HUMAN</name>
<sequence length="495" mass="48748">MTLGSCCCEIMSSESSPAALSEADADIDVVGGGSGGGELPARSGPRAPRDVLPHGHEPPAEEAEADLAEDEEESGGCSDGEPRALASRGAAAAAGSPGPGAAAARGAAGPGPGPPSGGAATRSPLVKPPYSYIALITMAILQSPKKRLTLSEICEFISGRFPYYREKFPAWQNSIRHNLSLNDCFVKIPREPGNPGKGNYWTLDPESADMFDNGSFLRRRKRFKRQPLPPPHPHPHPHPELLLRGGAAAAGDPGAFLPGFAAYGAYGYGYGLALPAYGAPPPGPAPHPHPHPHAFAFAAAAAAAPCQLSVPPGRAAAPPPGPPTASVFAGAGSAPAPAPASGSGPGPGPAGLPAFLGAELGCAKAFYAASLSPPAAGTAAGLPTALLRQGLKTDAGGGAGGGGAGAGQRPSFSIDHIMGHGGGGAAPPGAGEGSPGPPFAAAAGPGGQAQVLAMLTAPALAPVAGHIRLSHPGDALLSSGSRFASKVAGLSGCHF</sequence>
<comment type="function">
    <text evidence="1">Probable transcription factor involved in embryogenesis and somatogenesis.</text>
</comment>
<comment type="interaction">
    <interactant intactId="EBI-17282008">
        <id>O60548</id>
    </interactant>
    <interactant intactId="EBI-948603">
        <id>Q03989</id>
        <label>ARID5A</label>
    </interactant>
    <organismsDiffer>false</organismsDiffer>
    <experiments>3</experiments>
</comment>
<comment type="interaction">
    <interactant intactId="EBI-17282008">
        <id>O60548</id>
    </interactant>
    <interactant intactId="EBI-10179719">
        <id>A2RRN7</id>
        <label>CADPS</label>
    </interactant>
    <organismsDiffer>false</organismsDiffer>
    <experiments>3</experiments>
</comment>
<comment type="interaction">
    <interactant intactId="EBI-17282008">
        <id>O60548</id>
    </interactant>
    <interactant intactId="EBI-3867333">
        <id>A8MQ03</id>
        <label>CYSRT1</label>
    </interactant>
    <organismsDiffer>false</organismsDiffer>
    <experiments>3</experiments>
</comment>
<comment type="interaction">
    <interactant intactId="EBI-17282008">
        <id>O60548</id>
    </interactant>
    <interactant intactId="EBI-1759806">
        <id>O75593</id>
        <label>FOXH1</label>
    </interactant>
    <organismsDiffer>false</organismsDiffer>
    <experiments>3</experiments>
</comment>
<comment type="interaction">
    <interactant intactId="EBI-17282008">
        <id>O60548</id>
    </interactant>
    <interactant intactId="EBI-11992140">
        <id>Q3LI76</id>
        <label>KRTAP15-1</label>
    </interactant>
    <organismsDiffer>false</organismsDiffer>
    <experiments>3</experiments>
</comment>
<comment type="interaction">
    <interactant intactId="EBI-17282008">
        <id>O60548</id>
    </interactant>
    <interactant intactId="EBI-12196745">
        <id>Q3LHN2</id>
        <label>KRTAP19-2</label>
    </interactant>
    <organismsDiffer>false</organismsDiffer>
    <experiments>3</experiments>
</comment>
<comment type="interaction">
    <interactant intactId="EBI-17282008">
        <id>O60548</id>
    </interactant>
    <interactant intactId="EBI-10241353">
        <id>Q3SYF9</id>
        <label>KRTAP19-7</label>
    </interactant>
    <organismsDiffer>false</organismsDiffer>
    <experiments>3</experiments>
</comment>
<comment type="interaction">
    <interactant intactId="EBI-17282008">
        <id>O60548</id>
    </interactant>
    <interactant intactId="EBI-18395721">
        <id>Q3LI59</id>
        <label>KRTAP21-2</label>
    </interactant>
    <organismsDiffer>false</organismsDiffer>
    <experiments>3</experiments>
</comment>
<comment type="interaction">
    <interactant intactId="EBI-17282008">
        <id>O60548</id>
    </interactant>
    <interactant intactId="EBI-751260">
        <id>Q9BYR7</id>
        <label>KRTAP3-2</label>
    </interactant>
    <organismsDiffer>false</organismsDiffer>
    <experiments>3</experiments>
</comment>
<comment type="interaction">
    <interactant intactId="EBI-17282008">
        <id>O60548</id>
    </interactant>
    <interactant intactId="EBI-11962084">
        <id>Q3LI66</id>
        <label>KRTAP6-2</label>
    </interactant>
    <organismsDiffer>false</organismsDiffer>
    <experiments>3</experiments>
</comment>
<comment type="interaction">
    <interactant intactId="EBI-17282008">
        <id>O60548</id>
    </interactant>
    <interactant intactId="EBI-22311199">
        <id>Q3LI67</id>
        <label>KRTAP6-3</label>
    </interactant>
    <organismsDiffer>false</organismsDiffer>
    <experiments>3</experiments>
</comment>
<comment type="interaction">
    <interactant intactId="EBI-17282008">
        <id>O60548</id>
    </interactant>
    <interactant intactId="EBI-10261141">
        <id>Q8IUC2</id>
        <label>KRTAP8-1</label>
    </interactant>
    <organismsDiffer>false</organismsDiffer>
    <experiments>3</experiments>
</comment>
<comment type="interaction">
    <interactant intactId="EBI-17282008">
        <id>O60548</id>
    </interactant>
    <interactant intactId="EBI-716006">
        <id>Q9Y5V3</id>
        <label>MAGED1</label>
    </interactant>
    <organismsDiffer>false</organismsDiffer>
    <experiments>3</experiments>
</comment>
<comment type="interaction">
    <interactant intactId="EBI-17282008">
        <id>O60548</id>
    </interactant>
    <interactant intactId="EBI-17490746">
        <id>A8MTQ0</id>
        <label>NOTO</label>
    </interactant>
    <organismsDiffer>false</organismsDiffer>
    <experiments>3</experiments>
</comment>
<comment type="interaction">
    <interactant intactId="EBI-17282008">
        <id>O60548</id>
    </interactant>
    <interactant intactId="EBI-943588">
        <id>Q16633</id>
        <label>POU2AF1</label>
    </interactant>
    <organismsDiffer>false</organismsDiffer>
    <experiments>3</experiments>
</comment>
<comment type="interaction">
    <interactant intactId="EBI-17282008">
        <id>O60548</id>
    </interactant>
    <interactant intactId="EBI-743976">
        <id>Q96LM6</id>
        <label>SPMIP9</label>
    </interactant>
    <organismsDiffer>false</organismsDiffer>
    <experiments>3</experiments>
</comment>
<comment type="interaction">
    <interactant intactId="EBI-17282008">
        <id>O60548</id>
    </interactant>
    <interactant intactId="EBI-11741437">
        <id>Q08117-2</id>
        <label>TLE5</label>
    </interactant>
    <organismsDiffer>false</organismsDiffer>
    <experiments>3</experiments>
</comment>
<comment type="subcellular location">
    <subcellularLocation>
        <location evidence="2">Nucleus</location>
    </subcellularLocation>
</comment>
<comment type="tissue specificity">
    <text evidence="4">Kidney specific.</text>
</comment>
<protein>
    <recommendedName>
        <fullName>Forkhead box protein D2</fullName>
    </recommendedName>
    <alternativeName>
        <fullName>Forkhead-related protein FKHL17</fullName>
    </alternativeName>
    <alternativeName>
        <fullName>Forkhead-related transcription factor 9</fullName>
        <shortName>FREAC-9</shortName>
    </alternativeName>
</protein>